<gene>
    <name type="primary">SRP14</name>
    <name type="ORF">QtrA-11111</name>
</gene>
<organism>
    <name type="scientific">Macaca fascicularis</name>
    <name type="common">Crab-eating macaque</name>
    <name type="synonym">Cynomolgus monkey</name>
    <dbReference type="NCBI Taxonomy" id="9541"/>
    <lineage>
        <taxon>Eukaryota</taxon>
        <taxon>Metazoa</taxon>
        <taxon>Chordata</taxon>
        <taxon>Craniata</taxon>
        <taxon>Vertebrata</taxon>
        <taxon>Euteleostomi</taxon>
        <taxon>Mammalia</taxon>
        <taxon>Eutheria</taxon>
        <taxon>Euarchontoglires</taxon>
        <taxon>Primates</taxon>
        <taxon>Haplorrhini</taxon>
        <taxon>Catarrhini</taxon>
        <taxon>Cercopithecidae</taxon>
        <taxon>Cercopithecinae</taxon>
        <taxon>Macaca</taxon>
    </lineage>
</organism>
<name>SRP14_MACFA</name>
<feature type="chain" id="PRO_0000322236" description="Signal recognition particle 14 kDa protein">
    <location>
        <begin position="1"/>
        <end position="144"/>
    </location>
</feature>
<feature type="modified residue" description="Phosphotyrosine" evidence="3">
    <location>
        <position position="27"/>
    </location>
</feature>
<evidence type="ECO:0000250" key="1"/>
<evidence type="ECO:0000250" key="2">
    <source>
        <dbReference type="UniProtKB" id="P16255"/>
    </source>
</evidence>
<evidence type="ECO:0000250" key="3">
    <source>
        <dbReference type="UniProtKB" id="P37108"/>
    </source>
</evidence>
<evidence type="ECO:0000305" key="4"/>
<dbReference type="EMBL" id="AB169617">
    <property type="protein sequence ID" value="BAE01698.1"/>
    <property type="molecule type" value="mRNA"/>
</dbReference>
<dbReference type="RefSeq" id="NP_001272066.1">
    <property type="nucleotide sequence ID" value="NM_001285137.1"/>
</dbReference>
<dbReference type="RefSeq" id="XP_045251218.1">
    <property type="nucleotide sequence ID" value="XM_045395283.1"/>
</dbReference>
<dbReference type="SMR" id="Q4R5C7"/>
<dbReference type="STRING" id="9541.ENSMFAP00000036104"/>
<dbReference type="GeneID" id="101864926"/>
<dbReference type="eggNOG" id="KOG1761">
    <property type="taxonomic scope" value="Eukaryota"/>
</dbReference>
<dbReference type="OrthoDB" id="19209at2759"/>
<dbReference type="Proteomes" id="UP000233100">
    <property type="component" value="Unplaced"/>
</dbReference>
<dbReference type="GO" id="GO:0005786">
    <property type="term" value="C:signal recognition particle, endoplasmic reticulum targeting"/>
    <property type="evidence" value="ECO:0007669"/>
    <property type="project" value="UniProtKB-KW"/>
</dbReference>
<dbReference type="GO" id="GO:0008312">
    <property type="term" value="F:7S RNA binding"/>
    <property type="evidence" value="ECO:0007669"/>
    <property type="project" value="InterPro"/>
</dbReference>
<dbReference type="GO" id="GO:0030942">
    <property type="term" value="F:endoplasmic reticulum signal peptide binding"/>
    <property type="evidence" value="ECO:0007669"/>
    <property type="project" value="InterPro"/>
</dbReference>
<dbReference type="GO" id="GO:0006614">
    <property type="term" value="P:SRP-dependent cotranslational protein targeting to membrane"/>
    <property type="evidence" value="ECO:0007669"/>
    <property type="project" value="InterPro"/>
</dbReference>
<dbReference type="FunFam" id="3.30.720.10:FF:000002">
    <property type="entry name" value="signal recognition particle 14 kDa protein-like"/>
    <property type="match status" value="1"/>
</dbReference>
<dbReference type="Gene3D" id="3.30.720.10">
    <property type="entry name" value="Signal recognition particle alu RNA binding heterodimer, srp9/1"/>
    <property type="match status" value="1"/>
</dbReference>
<dbReference type="InterPro" id="IPR003210">
    <property type="entry name" value="Signal_recog_particle_SRP14"/>
</dbReference>
<dbReference type="InterPro" id="IPR009018">
    <property type="entry name" value="Signal_recog_particle_SRP9/14"/>
</dbReference>
<dbReference type="PANTHER" id="PTHR12013">
    <property type="entry name" value="SIGNAL RECOGNITION PARTICLE 14 KD PROTEIN"/>
    <property type="match status" value="1"/>
</dbReference>
<dbReference type="Pfam" id="PF02290">
    <property type="entry name" value="SRP14"/>
    <property type="match status" value="1"/>
</dbReference>
<dbReference type="SUPFAM" id="SSF54762">
    <property type="entry name" value="Signal recognition particle alu RNA binding heterodimer, SRP9/14"/>
    <property type="match status" value="1"/>
</dbReference>
<sequence length="144" mass="15193">MVLLESEQFLTELTRLFQKCRTSGSVYITLKKYDGRTKPIPKKGTVEGFEPADNKCLLRATDGKKKISTVVSSKEVNKFQMAYSNLLRANMDGLKKRDKKNKTKKTKAAAAAAAAAVAAAAAPAAAATTATPATPAATAATAAQ</sequence>
<proteinExistence type="evidence at transcript level"/>
<accession>Q4R5C7</accession>
<comment type="function">
    <text evidence="3">Component of the signal recognition particle (SRP) complex, a ribonucleoprotein complex that mediates the cotranslational targeting of secretory and membrane proteins to the endoplasmic reticulum (ER) (By similarity). SRP9 together with SRP14 and the Alu portion of the SRP RNA, constitutes the elongation arrest domain of SRP (By similarity). The complex of SRP9 and SRP14 is required for SRP RNA binding (By similarity).</text>
</comment>
<comment type="subunit">
    <text evidence="2 3">Heterodimer with SRP9; binds RNA as heterodimer (By similarity). Component of a signal recognition particle (SRP) complex that consists of a 7SL RNA molecule of 300 nucleotides and six protein subunits: SRP72, SRP68, SRP54, SRP19, SRP14 and SRP9 (By similarity).</text>
</comment>
<comment type="subcellular location">
    <subcellularLocation>
        <location evidence="1">Cytoplasm</location>
    </subcellularLocation>
</comment>
<comment type="similarity">
    <text evidence="4">Belongs to the SRP14 family.</text>
</comment>
<keyword id="KW-0963">Cytoplasm</keyword>
<keyword id="KW-0597">Phosphoprotein</keyword>
<keyword id="KW-1185">Reference proteome</keyword>
<keyword id="KW-0687">Ribonucleoprotein</keyword>
<keyword id="KW-0694">RNA-binding</keyword>
<keyword id="KW-0733">Signal recognition particle</keyword>
<reference key="1">
    <citation type="submission" date="2005-06" db="EMBL/GenBank/DDBJ databases">
        <title>DNA sequences of macaque genes expressed in brain or testis and its evolutionary implications.</title>
        <authorList>
            <consortium name="International consortium for macaque cDNA sequencing and analysis"/>
        </authorList>
    </citation>
    <scope>NUCLEOTIDE SEQUENCE [LARGE SCALE MRNA]</scope>
    <source>
        <tissue>Temporal cortex</tissue>
    </source>
</reference>
<protein>
    <recommendedName>
        <fullName>Signal recognition particle 14 kDa protein</fullName>
        <shortName>SRP14</shortName>
    </recommendedName>
</protein>